<keyword id="KW-0030">Aminoacyl-tRNA synthetase</keyword>
<keyword id="KW-0067">ATP-binding</keyword>
<keyword id="KW-0963">Cytoplasm</keyword>
<keyword id="KW-0436">Ligase</keyword>
<keyword id="KW-0479">Metal-binding</keyword>
<keyword id="KW-0547">Nucleotide-binding</keyword>
<keyword id="KW-0648">Protein biosynthesis</keyword>
<keyword id="KW-0694">RNA-binding</keyword>
<keyword id="KW-0820">tRNA-binding</keyword>
<keyword id="KW-0862">Zinc</keyword>
<sequence length="636" mass="72773">MINITTSFPNKTAAAFHKHVTGSEVASAMFPEIAESIVALFVDGNLQDLATPISKDGSVDPVTIESNTGMDIIRHDAAHIMARAVREIFPDTKLAIGPTIENGFYYDFDLSHSLSEKDFEAIERKMADIIAKDERFVREVWPRERAIKFFEDLGEHYKLEILSKVPLGEEITVYKHGEFVDLCRGPHAPSARYVKAFKLTKISGAYWLGDQKNKMLQRVYGTAWHSSEALASYIHNMQEAEKRDHRKIAKDLGWFHIQNEALGQVFWHDKGWVIYRIIEEYIRCKLKKHGYHEVKTPIMLDRKLWEKSGHWEKFKENMFVVEDDKKELAIKPMNCPCHVQIFKSKIRSYKELPIRMAEFGMCHRNEPSGSLYGLMRVRGFTQDDAHIFCTHEQVRDEVLRFYELLMEVYKDFGFDSVTVKLSDRPENRIGSDEIWDRSEQSLMEPMNALGVQYTINKGEGAFYGPKLEFTLKDSIGREWQCGTVQLDFVLPDRLGAYYIGEDGKKHIPVIIHRAILGTIERFIGILIEHYAGNIPAWLAPVQLEILTVSGEVAEYARDLAEMASQENVRVELNAAEENISHKIRKAIFNKVPIVWVVGKSEAGDRGVSVRRYGSGETCRMAAGKALKTLLTCVSMR</sequence>
<dbReference type="EC" id="6.1.1.3" evidence="1"/>
<dbReference type="EMBL" id="CP000030">
    <property type="protein sequence ID" value="AAV87074.1"/>
    <property type="molecule type" value="Genomic_DNA"/>
</dbReference>
<dbReference type="RefSeq" id="WP_011114655.1">
    <property type="nucleotide sequence ID" value="NC_004842.2"/>
</dbReference>
<dbReference type="SMR" id="Q5P9F6"/>
<dbReference type="KEGG" id="ama:AM1273"/>
<dbReference type="HOGENOM" id="CLU_008554_0_1_5"/>
<dbReference type="GO" id="GO:0005737">
    <property type="term" value="C:cytoplasm"/>
    <property type="evidence" value="ECO:0007669"/>
    <property type="project" value="UniProtKB-SubCell"/>
</dbReference>
<dbReference type="GO" id="GO:0005524">
    <property type="term" value="F:ATP binding"/>
    <property type="evidence" value="ECO:0007669"/>
    <property type="project" value="UniProtKB-UniRule"/>
</dbReference>
<dbReference type="GO" id="GO:0046872">
    <property type="term" value="F:metal ion binding"/>
    <property type="evidence" value="ECO:0007669"/>
    <property type="project" value="UniProtKB-KW"/>
</dbReference>
<dbReference type="GO" id="GO:0004829">
    <property type="term" value="F:threonine-tRNA ligase activity"/>
    <property type="evidence" value="ECO:0007669"/>
    <property type="project" value="UniProtKB-UniRule"/>
</dbReference>
<dbReference type="GO" id="GO:0000049">
    <property type="term" value="F:tRNA binding"/>
    <property type="evidence" value="ECO:0007669"/>
    <property type="project" value="UniProtKB-KW"/>
</dbReference>
<dbReference type="GO" id="GO:0006435">
    <property type="term" value="P:threonyl-tRNA aminoacylation"/>
    <property type="evidence" value="ECO:0007669"/>
    <property type="project" value="UniProtKB-UniRule"/>
</dbReference>
<dbReference type="CDD" id="cd01667">
    <property type="entry name" value="TGS_ThrRS"/>
    <property type="match status" value="1"/>
</dbReference>
<dbReference type="CDD" id="cd00771">
    <property type="entry name" value="ThrRS_core"/>
    <property type="match status" value="1"/>
</dbReference>
<dbReference type="FunFam" id="3.30.54.20:FF:000002">
    <property type="entry name" value="Threonine--tRNA ligase"/>
    <property type="match status" value="1"/>
</dbReference>
<dbReference type="FunFam" id="3.30.930.10:FF:000002">
    <property type="entry name" value="Threonine--tRNA ligase"/>
    <property type="match status" value="1"/>
</dbReference>
<dbReference type="FunFam" id="3.30.980.10:FF:000005">
    <property type="entry name" value="Threonyl-tRNA synthetase, mitochondrial"/>
    <property type="match status" value="1"/>
</dbReference>
<dbReference type="Gene3D" id="3.10.20.30">
    <property type="match status" value="1"/>
</dbReference>
<dbReference type="Gene3D" id="3.30.54.20">
    <property type="match status" value="1"/>
</dbReference>
<dbReference type="Gene3D" id="3.40.50.800">
    <property type="entry name" value="Anticodon-binding domain"/>
    <property type="match status" value="1"/>
</dbReference>
<dbReference type="Gene3D" id="3.30.930.10">
    <property type="entry name" value="Bira Bifunctional Protein, Domain 2"/>
    <property type="match status" value="1"/>
</dbReference>
<dbReference type="Gene3D" id="3.30.980.10">
    <property type="entry name" value="Threonyl-trna Synthetase, Chain A, domain 2"/>
    <property type="match status" value="1"/>
</dbReference>
<dbReference type="HAMAP" id="MF_00184">
    <property type="entry name" value="Thr_tRNA_synth"/>
    <property type="match status" value="1"/>
</dbReference>
<dbReference type="InterPro" id="IPR002314">
    <property type="entry name" value="aa-tRNA-synt_IIb"/>
</dbReference>
<dbReference type="InterPro" id="IPR006195">
    <property type="entry name" value="aa-tRNA-synth_II"/>
</dbReference>
<dbReference type="InterPro" id="IPR045864">
    <property type="entry name" value="aa-tRNA-synth_II/BPL/LPL"/>
</dbReference>
<dbReference type="InterPro" id="IPR004154">
    <property type="entry name" value="Anticodon-bd"/>
</dbReference>
<dbReference type="InterPro" id="IPR036621">
    <property type="entry name" value="Anticodon-bd_dom_sf"/>
</dbReference>
<dbReference type="InterPro" id="IPR012675">
    <property type="entry name" value="Beta-grasp_dom_sf"/>
</dbReference>
<dbReference type="InterPro" id="IPR004095">
    <property type="entry name" value="TGS"/>
</dbReference>
<dbReference type="InterPro" id="IPR012676">
    <property type="entry name" value="TGS-like"/>
</dbReference>
<dbReference type="InterPro" id="IPR002320">
    <property type="entry name" value="Thr-tRNA-ligase_IIa"/>
</dbReference>
<dbReference type="InterPro" id="IPR018163">
    <property type="entry name" value="Thr/Ala-tRNA-synth_IIc_edit"/>
</dbReference>
<dbReference type="InterPro" id="IPR033728">
    <property type="entry name" value="ThrRS_core"/>
</dbReference>
<dbReference type="InterPro" id="IPR012947">
    <property type="entry name" value="tRNA_SAD"/>
</dbReference>
<dbReference type="NCBIfam" id="TIGR00418">
    <property type="entry name" value="thrS"/>
    <property type="match status" value="1"/>
</dbReference>
<dbReference type="PANTHER" id="PTHR11451:SF44">
    <property type="entry name" value="THREONINE--TRNA LIGASE, CHLOROPLASTIC_MITOCHONDRIAL 2"/>
    <property type="match status" value="1"/>
</dbReference>
<dbReference type="PANTHER" id="PTHR11451">
    <property type="entry name" value="THREONINE-TRNA LIGASE"/>
    <property type="match status" value="1"/>
</dbReference>
<dbReference type="Pfam" id="PF03129">
    <property type="entry name" value="HGTP_anticodon"/>
    <property type="match status" value="1"/>
</dbReference>
<dbReference type="Pfam" id="PF00587">
    <property type="entry name" value="tRNA-synt_2b"/>
    <property type="match status" value="1"/>
</dbReference>
<dbReference type="Pfam" id="PF07973">
    <property type="entry name" value="tRNA_SAD"/>
    <property type="match status" value="1"/>
</dbReference>
<dbReference type="PRINTS" id="PR01047">
    <property type="entry name" value="TRNASYNTHTHR"/>
</dbReference>
<dbReference type="SMART" id="SM00863">
    <property type="entry name" value="tRNA_SAD"/>
    <property type="match status" value="1"/>
</dbReference>
<dbReference type="SUPFAM" id="SSF52954">
    <property type="entry name" value="Class II aaRS ABD-related"/>
    <property type="match status" value="1"/>
</dbReference>
<dbReference type="SUPFAM" id="SSF55681">
    <property type="entry name" value="Class II aaRS and biotin synthetases"/>
    <property type="match status" value="1"/>
</dbReference>
<dbReference type="SUPFAM" id="SSF81271">
    <property type="entry name" value="TGS-like"/>
    <property type="match status" value="1"/>
</dbReference>
<dbReference type="SUPFAM" id="SSF55186">
    <property type="entry name" value="ThrRS/AlaRS common domain"/>
    <property type="match status" value="1"/>
</dbReference>
<dbReference type="PROSITE" id="PS50862">
    <property type="entry name" value="AA_TRNA_LIGASE_II"/>
    <property type="match status" value="1"/>
</dbReference>
<dbReference type="PROSITE" id="PS51880">
    <property type="entry name" value="TGS"/>
    <property type="match status" value="1"/>
</dbReference>
<proteinExistence type="inferred from homology"/>
<reference key="1">
    <citation type="journal article" date="2005" name="Proc. Natl. Acad. Sci. U.S.A.">
        <title>Complete genome sequencing of Anaplasma marginale reveals that the surface is skewed to two superfamilies of outer membrane proteins.</title>
        <authorList>
            <person name="Brayton K.A."/>
            <person name="Kappmeyer L.S."/>
            <person name="Herndon D.R."/>
            <person name="Dark M.J."/>
            <person name="Tibbals D.L."/>
            <person name="Palmer G.H."/>
            <person name="McGuire T.C."/>
            <person name="Knowles D.P. Jr."/>
        </authorList>
    </citation>
    <scope>NUCLEOTIDE SEQUENCE [LARGE SCALE GENOMIC DNA]</scope>
    <source>
        <strain>St. Maries</strain>
    </source>
</reference>
<feature type="chain" id="PRO_0000100932" description="Threonine--tRNA ligase">
    <location>
        <begin position="1"/>
        <end position="636"/>
    </location>
</feature>
<feature type="domain" description="TGS" evidence="2">
    <location>
        <begin position="1"/>
        <end position="63"/>
    </location>
</feature>
<feature type="region of interest" description="Catalytic" evidence="1">
    <location>
        <begin position="244"/>
        <end position="535"/>
    </location>
</feature>
<feature type="binding site" evidence="1">
    <location>
        <position position="335"/>
    </location>
    <ligand>
        <name>Zn(2+)</name>
        <dbReference type="ChEBI" id="CHEBI:29105"/>
    </ligand>
</feature>
<feature type="binding site" evidence="1">
    <location>
        <position position="386"/>
    </location>
    <ligand>
        <name>Zn(2+)</name>
        <dbReference type="ChEBI" id="CHEBI:29105"/>
    </ligand>
</feature>
<feature type="binding site" evidence="1">
    <location>
        <position position="512"/>
    </location>
    <ligand>
        <name>Zn(2+)</name>
        <dbReference type="ChEBI" id="CHEBI:29105"/>
    </ligand>
</feature>
<evidence type="ECO:0000255" key="1">
    <source>
        <dbReference type="HAMAP-Rule" id="MF_00184"/>
    </source>
</evidence>
<evidence type="ECO:0000255" key="2">
    <source>
        <dbReference type="PROSITE-ProRule" id="PRU01228"/>
    </source>
</evidence>
<accession>Q5P9F6</accession>
<gene>
    <name evidence="1" type="primary">thrS</name>
    <name type="ordered locus">AM1273</name>
</gene>
<name>SYT_ANAMM</name>
<organism>
    <name type="scientific">Anaplasma marginale (strain St. Maries)</name>
    <dbReference type="NCBI Taxonomy" id="234826"/>
    <lineage>
        <taxon>Bacteria</taxon>
        <taxon>Pseudomonadati</taxon>
        <taxon>Pseudomonadota</taxon>
        <taxon>Alphaproteobacteria</taxon>
        <taxon>Rickettsiales</taxon>
        <taxon>Anaplasmataceae</taxon>
        <taxon>Anaplasma</taxon>
    </lineage>
</organism>
<comment type="function">
    <text evidence="1">Catalyzes the attachment of threonine to tRNA(Thr) in a two-step reaction: L-threonine is first activated by ATP to form Thr-AMP and then transferred to the acceptor end of tRNA(Thr). Also edits incorrectly charged L-seryl-tRNA(Thr).</text>
</comment>
<comment type="catalytic activity">
    <reaction evidence="1">
        <text>tRNA(Thr) + L-threonine + ATP = L-threonyl-tRNA(Thr) + AMP + diphosphate + H(+)</text>
        <dbReference type="Rhea" id="RHEA:24624"/>
        <dbReference type="Rhea" id="RHEA-COMP:9670"/>
        <dbReference type="Rhea" id="RHEA-COMP:9704"/>
        <dbReference type="ChEBI" id="CHEBI:15378"/>
        <dbReference type="ChEBI" id="CHEBI:30616"/>
        <dbReference type="ChEBI" id="CHEBI:33019"/>
        <dbReference type="ChEBI" id="CHEBI:57926"/>
        <dbReference type="ChEBI" id="CHEBI:78442"/>
        <dbReference type="ChEBI" id="CHEBI:78534"/>
        <dbReference type="ChEBI" id="CHEBI:456215"/>
        <dbReference type="EC" id="6.1.1.3"/>
    </reaction>
</comment>
<comment type="cofactor">
    <cofactor evidence="1">
        <name>Zn(2+)</name>
        <dbReference type="ChEBI" id="CHEBI:29105"/>
    </cofactor>
    <text evidence="1">Binds 1 zinc ion per subunit.</text>
</comment>
<comment type="subunit">
    <text evidence="1">Homodimer.</text>
</comment>
<comment type="subcellular location">
    <subcellularLocation>
        <location evidence="1">Cytoplasm</location>
    </subcellularLocation>
</comment>
<comment type="similarity">
    <text evidence="1">Belongs to the class-II aminoacyl-tRNA synthetase family.</text>
</comment>
<protein>
    <recommendedName>
        <fullName evidence="1">Threonine--tRNA ligase</fullName>
        <ecNumber evidence="1">6.1.1.3</ecNumber>
    </recommendedName>
    <alternativeName>
        <fullName evidence="1">Threonyl-tRNA synthetase</fullName>
        <shortName evidence="1">ThrRS</shortName>
    </alternativeName>
</protein>